<proteinExistence type="inferred from homology"/>
<dbReference type="EC" id="5.4.2.7" evidence="1"/>
<dbReference type="EMBL" id="CP001001">
    <property type="protein sequence ID" value="ACB22826.1"/>
    <property type="molecule type" value="Genomic_DNA"/>
</dbReference>
<dbReference type="RefSeq" id="WP_012317819.1">
    <property type="nucleotide sequence ID" value="NC_010505.1"/>
</dbReference>
<dbReference type="SMR" id="B1LYJ9"/>
<dbReference type="STRING" id="426355.Mrad2831_0816"/>
<dbReference type="GeneID" id="6136832"/>
<dbReference type="KEGG" id="mrd:Mrad2831_0816"/>
<dbReference type="PATRIC" id="fig|426355.14.peg.851"/>
<dbReference type="eggNOG" id="COG1015">
    <property type="taxonomic scope" value="Bacteria"/>
</dbReference>
<dbReference type="HOGENOM" id="CLU_053861_0_0_5"/>
<dbReference type="OrthoDB" id="9769930at2"/>
<dbReference type="UniPathway" id="UPA00002">
    <property type="reaction ID" value="UER00467"/>
</dbReference>
<dbReference type="Proteomes" id="UP000006589">
    <property type="component" value="Chromosome"/>
</dbReference>
<dbReference type="GO" id="GO:0005829">
    <property type="term" value="C:cytosol"/>
    <property type="evidence" value="ECO:0007669"/>
    <property type="project" value="TreeGrafter"/>
</dbReference>
<dbReference type="GO" id="GO:0000287">
    <property type="term" value="F:magnesium ion binding"/>
    <property type="evidence" value="ECO:0007669"/>
    <property type="project" value="InterPro"/>
</dbReference>
<dbReference type="GO" id="GO:0030145">
    <property type="term" value="F:manganese ion binding"/>
    <property type="evidence" value="ECO:0007669"/>
    <property type="project" value="UniProtKB-UniRule"/>
</dbReference>
<dbReference type="GO" id="GO:0008973">
    <property type="term" value="F:phosphopentomutase activity"/>
    <property type="evidence" value="ECO:0007669"/>
    <property type="project" value="UniProtKB-UniRule"/>
</dbReference>
<dbReference type="GO" id="GO:0006018">
    <property type="term" value="P:2-deoxyribose 1-phosphate catabolic process"/>
    <property type="evidence" value="ECO:0007669"/>
    <property type="project" value="UniProtKB-UniRule"/>
</dbReference>
<dbReference type="GO" id="GO:0006015">
    <property type="term" value="P:5-phosphoribose 1-diphosphate biosynthetic process"/>
    <property type="evidence" value="ECO:0007669"/>
    <property type="project" value="UniProtKB-UniPathway"/>
</dbReference>
<dbReference type="GO" id="GO:0043094">
    <property type="term" value="P:metabolic compound salvage"/>
    <property type="evidence" value="ECO:0007669"/>
    <property type="project" value="InterPro"/>
</dbReference>
<dbReference type="GO" id="GO:0009117">
    <property type="term" value="P:nucleotide metabolic process"/>
    <property type="evidence" value="ECO:0007669"/>
    <property type="project" value="InterPro"/>
</dbReference>
<dbReference type="CDD" id="cd16009">
    <property type="entry name" value="PPM"/>
    <property type="match status" value="1"/>
</dbReference>
<dbReference type="Gene3D" id="3.40.720.10">
    <property type="entry name" value="Alkaline Phosphatase, subunit A"/>
    <property type="match status" value="1"/>
</dbReference>
<dbReference type="Gene3D" id="3.30.70.1250">
    <property type="entry name" value="Phosphopentomutase"/>
    <property type="match status" value="1"/>
</dbReference>
<dbReference type="HAMAP" id="MF_00740">
    <property type="entry name" value="Phosphopentomut"/>
    <property type="match status" value="1"/>
</dbReference>
<dbReference type="InterPro" id="IPR017850">
    <property type="entry name" value="Alkaline_phosphatase_core_sf"/>
</dbReference>
<dbReference type="InterPro" id="IPR010045">
    <property type="entry name" value="DeoB"/>
</dbReference>
<dbReference type="InterPro" id="IPR006124">
    <property type="entry name" value="Metalloenzyme"/>
</dbReference>
<dbReference type="InterPro" id="IPR024052">
    <property type="entry name" value="Phosphopentomutase_DeoB_cap_sf"/>
</dbReference>
<dbReference type="NCBIfam" id="TIGR01696">
    <property type="entry name" value="deoB"/>
    <property type="match status" value="1"/>
</dbReference>
<dbReference type="NCBIfam" id="NF003766">
    <property type="entry name" value="PRK05362.1"/>
    <property type="match status" value="1"/>
</dbReference>
<dbReference type="PANTHER" id="PTHR21110">
    <property type="entry name" value="PHOSPHOPENTOMUTASE"/>
    <property type="match status" value="1"/>
</dbReference>
<dbReference type="PANTHER" id="PTHR21110:SF0">
    <property type="entry name" value="PHOSPHOPENTOMUTASE"/>
    <property type="match status" value="1"/>
</dbReference>
<dbReference type="Pfam" id="PF01676">
    <property type="entry name" value="Metalloenzyme"/>
    <property type="match status" value="1"/>
</dbReference>
<dbReference type="PIRSF" id="PIRSF001491">
    <property type="entry name" value="Ppentomutase"/>
    <property type="match status" value="1"/>
</dbReference>
<dbReference type="SUPFAM" id="SSF53649">
    <property type="entry name" value="Alkaline phosphatase-like"/>
    <property type="match status" value="1"/>
</dbReference>
<dbReference type="SUPFAM" id="SSF143856">
    <property type="entry name" value="DeoB insert domain-like"/>
    <property type="match status" value="1"/>
</dbReference>
<reference key="1">
    <citation type="submission" date="2008-03" db="EMBL/GenBank/DDBJ databases">
        <title>Complete sequence of chromosome of Methylobacterium radiotolerans JCM 2831.</title>
        <authorList>
            <consortium name="US DOE Joint Genome Institute"/>
            <person name="Copeland A."/>
            <person name="Lucas S."/>
            <person name="Lapidus A."/>
            <person name="Glavina del Rio T."/>
            <person name="Dalin E."/>
            <person name="Tice H."/>
            <person name="Bruce D."/>
            <person name="Goodwin L."/>
            <person name="Pitluck S."/>
            <person name="Kiss H."/>
            <person name="Brettin T."/>
            <person name="Detter J.C."/>
            <person name="Han C."/>
            <person name="Kuske C.R."/>
            <person name="Schmutz J."/>
            <person name="Larimer F."/>
            <person name="Land M."/>
            <person name="Hauser L."/>
            <person name="Kyrpides N."/>
            <person name="Mikhailova N."/>
            <person name="Marx C.J."/>
            <person name="Richardson P."/>
        </authorList>
    </citation>
    <scope>NUCLEOTIDE SEQUENCE [LARGE SCALE GENOMIC DNA]</scope>
    <source>
        <strain>ATCC 27329 / DSM 1819 / JCM 2831 / NBRC 15690 / NCIMB 10815 / 0-1</strain>
    </source>
</reference>
<name>DEOB_METRJ</name>
<accession>B1LYJ9</accession>
<gene>
    <name evidence="1" type="primary">deoB</name>
    <name type="ordered locus">Mrad2831_0816</name>
</gene>
<feature type="chain" id="PRO_1000133088" description="Phosphopentomutase">
    <location>
        <begin position="1"/>
        <end position="406"/>
    </location>
</feature>
<feature type="binding site" evidence="1">
    <location>
        <position position="10"/>
    </location>
    <ligand>
        <name>Mn(2+)</name>
        <dbReference type="ChEBI" id="CHEBI:29035"/>
        <label>1</label>
    </ligand>
</feature>
<feature type="binding site" evidence="1">
    <location>
        <position position="305"/>
    </location>
    <ligand>
        <name>Mn(2+)</name>
        <dbReference type="ChEBI" id="CHEBI:29035"/>
        <label>2</label>
    </ligand>
</feature>
<feature type="binding site" evidence="1">
    <location>
        <position position="310"/>
    </location>
    <ligand>
        <name>Mn(2+)</name>
        <dbReference type="ChEBI" id="CHEBI:29035"/>
        <label>2</label>
    </ligand>
</feature>
<feature type="binding site" evidence="1">
    <location>
        <position position="346"/>
    </location>
    <ligand>
        <name>Mn(2+)</name>
        <dbReference type="ChEBI" id="CHEBI:29035"/>
        <label>1</label>
    </ligand>
</feature>
<feature type="binding site" evidence="1">
    <location>
        <position position="347"/>
    </location>
    <ligand>
        <name>Mn(2+)</name>
        <dbReference type="ChEBI" id="CHEBI:29035"/>
        <label>1</label>
    </ligand>
</feature>
<feature type="binding site" evidence="1">
    <location>
        <position position="358"/>
    </location>
    <ligand>
        <name>Mn(2+)</name>
        <dbReference type="ChEBI" id="CHEBI:29035"/>
        <label>2</label>
    </ligand>
</feature>
<organism>
    <name type="scientific">Methylobacterium radiotolerans (strain ATCC 27329 / DSM 1819 / JCM 2831 / NBRC 15690 / NCIMB 10815 / 0-1)</name>
    <dbReference type="NCBI Taxonomy" id="426355"/>
    <lineage>
        <taxon>Bacteria</taxon>
        <taxon>Pseudomonadati</taxon>
        <taxon>Pseudomonadota</taxon>
        <taxon>Alphaproteobacteria</taxon>
        <taxon>Hyphomicrobiales</taxon>
        <taxon>Methylobacteriaceae</taxon>
        <taxon>Methylobacterium</taxon>
    </lineage>
</organism>
<protein>
    <recommendedName>
        <fullName evidence="1">Phosphopentomutase</fullName>
        <ecNumber evidence="1">5.4.2.7</ecNumber>
    </recommendedName>
    <alternativeName>
        <fullName evidence="1">Phosphodeoxyribomutase</fullName>
    </alternativeName>
</protein>
<sequence length="406" mass="42446">MARALIIVLDSVGVGGAPDADRYGDTGSDTLGHIAERCAEGRGDRAGLRAGPLRLPHLAELGLGLAAAGASGRIPPNLTPVGPPRGVYGHAVETAAGKDTPSGHWEIAGLPLPEPWGHFPDTRPAFPPELTRALVAEGDLPGILGDCHAPGVAIIDALGAEHLRTGRPICYTSADSVFQIAAHEEAFGLERLYDLCRVARRLCDRYRVCRVIARPFVGSPEAGFRRTGNRRDLAVAPPGRTLLDRAEAAGRAVVSVGKIGDIFAHRATGREIKPGPNAACLTAGLDALATLPQGGLIFVNLVDFDTEHGHRRDVPGYAAELEAFDARIPEILAALAPGDLAVITADHGNDPTWTGTDHTREQVPVLAFGPGVAARPIGRRETFADIGATVAAHLGLAWDGAGTPFL</sequence>
<comment type="function">
    <text evidence="1">Isomerase that catalyzes the conversion of deoxy-ribose 1-phosphate (dRib-1-P) and ribose 1-phosphate (Rib-1-P) to deoxy-ribose 5-phosphate (dRib-5-P) and ribose 5-phosphate (Rib-5-P), respectively.</text>
</comment>
<comment type="catalytic activity">
    <reaction evidence="1">
        <text>2-deoxy-alpha-D-ribose 1-phosphate = 2-deoxy-D-ribose 5-phosphate</text>
        <dbReference type="Rhea" id="RHEA:27658"/>
        <dbReference type="ChEBI" id="CHEBI:57259"/>
        <dbReference type="ChEBI" id="CHEBI:62877"/>
        <dbReference type="EC" id="5.4.2.7"/>
    </reaction>
</comment>
<comment type="catalytic activity">
    <reaction evidence="1">
        <text>alpha-D-ribose 1-phosphate = D-ribose 5-phosphate</text>
        <dbReference type="Rhea" id="RHEA:18793"/>
        <dbReference type="ChEBI" id="CHEBI:57720"/>
        <dbReference type="ChEBI" id="CHEBI:78346"/>
        <dbReference type="EC" id="5.4.2.7"/>
    </reaction>
</comment>
<comment type="cofactor">
    <cofactor evidence="1">
        <name>Mn(2+)</name>
        <dbReference type="ChEBI" id="CHEBI:29035"/>
    </cofactor>
    <text evidence="1">Binds 2 manganese ions.</text>
</comment>
<comment type="pathway">
    <text evidence="1">Carbohydrate degradation; 2-deoxy-D-ribose 1-phosphate degradation; D-glyceraldehyde 3-phosphate and acetaldehyde from 2-deoxy-alpha-D-ribose 1-phosphate: step 1/2.</text>
</comment>
<comment type="subcellular location">
    <subcellularLocation>
        <location evidence="1">Cytoplasm</location>
    </subcellularLocation>
</comment>
<comment type="similarity">
    <text evidence="1">Belongs to the phosphopentomutase family.</text>
</comment>
<evidence type="ECO:0000255" key="1">
    <source>
        <dbReference type="HAMAP-Rule" id="MF_00740"/>
    </source>
</evidence>
<keyword id="KW-0963">Cytoplasm</keyword>
<keyword id="KW-0413">Isomerase</keyword>
<keyword id="KW-0464">Manganese</keyword>
<keyword id="KW-0479">Metal-binding</keyword>